<comment type="function">
    <text>Through the carboxylation of phosphoenolpyruvate (PEP) it forms oxaloacetate, a four-carbon dicarboxylic acid source for the tricarboxylic acid cycle.</text>
</comment>
<comment type="catalytic activity">
    <reaction>
        <text>oxaloacetate + phosphate = phosphoenolpyruvate + hydrogencarbonate</text>
        <dbReference type="Rhea" id="RHEA:28370"/>
        <dbReference type="ChEBI" id="CHEBI:16452"/>
        <dbReference type="ChEBI" id="CHEBI:17544"/>
        <dbReference type="ChEBI" id="CHEBI:43474"/>
        <dbReference type="ChEBI" id="CHEBI:58702"/>
        <dbReference type="EC" id="4.1.1.31"/>
    </reaction>
</comment>
<comment type="cofactor">
    <cofactor evidence="1">
        <name>Mg(2+)</name>
        <dbReference type="ChEBI" id="CHEBI:18420"/>
    </cofactor>
</comment>
<comment type="activity regulation">
    <text evidence="1">By light-reversible phosphorylation.</text>
</comment>
<comment type="subunit">
    <text evidence="1">Homotetramer.</text>
</comment>
<comment type="subcellular location">
    <subcellularLocation>
        <location evidence="1">Cytoplasm</location>
    </subcellularLocation>
</comment>
<comment type="similarity">
    <text evidence="2">Belongs to the PEPCase type 1 family.</text>
</comment>
<gene>
    <name type="primary">PPC1</name>
</gene>
<protein>
    <recommendedName>
        <fullName>Phosphoenolpyruvate carboxylase</fullName>
        <shortName>PEPC</shortName>
        <shortName>PEPCase</shortName>
        <ecNumber>4.1.1.31</ecNumber>
    </recommendedName>
</protein>
<name>CAPP2_SOYBN</name>
<accession>P51061</accession>
<feature type="chain" id="PRO_0000166681" description="Phosphoenolpyruvate carboxylase">
    <location>
        <begin position="1"/>
        <end position="967"/>
    </location>
</feature>
<feature type="active site" evidence="1">
    <location>
        <position position="172"/>
    </location>
</feature>
<feature type="active site" evidence="1">
    <location>
        <position position="602"/>
    </location>
</feature>
<feature type="modified residue" description="Phosphoserine" evidence="1">
    <location>
        <position position="11"/>
    </location>
</feature>
<organism>
    <name type="scientific">Glycine max</name>
    <name type="common">Soybean</name>
    <name type="synonym">Glycine hispida</name>
    <dbReference type="NCBI Taxonomy" id="3847"/>
    <lineage>
        <taxon>Eukaryota</taxon>
        <taxon>Viridiplantae</taxon>
        <taxon>Streptophyta</taxon>
        <taxon>Embryophyta</taxon>
        <taxon>Tracheophyta</taxon>
        <taxon>Spermatophyta</taxon>
        <taxon>Magnoliopsida</taxon>
        <taxon>eudicotyledons</taxon>
        <taxon>Gunneridae</taxon>
        <taxon>Pentapetalae</taxon>
        <taxon>rosids</taxon>
        <taxon>fabids</taxon>
        <taxon>Fabales</taxon>
        <taxon>Fabaceae</taxon>
        <taxon>Papilionoideae</taxon>
        <taxon>50 kb inversion clade</taxon>
        <taxon>NPAAA clade</taxon>
        <taxon>indigoferoid/millettioid clade</taxon>
        <taxon>Phaseoleae</taxon>
        <taxon>Glycine</taxon>
        <taxon>Glycine subgen. Soja</taxon>
    </lineage>
</organism>
<reference key="1">
    <citation type="journal article" date="1993" name="Plant Physiol.">
        <title>Sequence of a soybean (Glycine max L.) phosphoenolpyruvate carboxylase cDNA.</title>
        <authorList>
            <person name="Vazquez-Tello A.V."/>
            <person name="Whittier R.F."/>
            <person name="Kawasaki T."/>
            <person name="Sugimoto T."/>
            <person name="Kawamura Y."/>
            <person name="Shibata D."/>
        </authorList>
    </citation>
    <scope>NUCLEOTIDE SEQUENCE [MRNA]</scope>
    <source>
        <strain>cv. Enrei</strain>
    </source>
</reference>
<keyword id="KW-0021">Allosteric enzyme</keyword>
<keyword id="KW-0120">Carbon dioxide fixation</keyword>
<keyword id="KW-0963">Cytoplasm</keyword>
<keyword id="KW-0456">Lyase</keyword>
<keyword id="KW-0460">Magnesium</keyword>
<keyword id="KW-0597">Phosphoprotein</keyword>
<keyword id="KW-0602">Photosynthesis</keyword>
<keyword id="KW-1185">Reference proteome</keyword>
<sequence length="967" mass="110761">MATRNLEKMASIDAQLRQLAPAKVSEDDKLIEYDALLLDRFLDILQDLHGEDLKETVQEVYELSAEYEGKHDPKKLEELGNLITSLDAGDSILVAKSFSHMLNLANLAEEVQISRRRRNKLKKGDFADENNATTESDIEETLKKLVFDLKKSPQEVFDALKNQTVDLVLTAHPTQSIRRSLLQKHGRIRNCLSQLYAKDITPDDKQELDEALQREIQAAFRTDEIRRTPPTPQDEMRAGMSYFHETIWNGVPRFLRRVDTALNNIGIKERVPYNAPLIQFSSWMGGDRDGNPRVTPEVTRDVCLLARMMAANLYYSQIEDLMFELSMWRCNDELRVRAEELHRSSKKDEVAKHYIEFWKKVPPNEPYRVVLGEVRDRLYQTRERSRHLLSNGYSDIPEEATFTNVEEFLESLELCYRSLCACGDRAIADGSLLDFMRQVSTFGLSLVRLDIRQESDRHTDVLDAITKHLEIGSYQEWSEEKRQEWLLSELSGKRPLFGPDLPQTEEIRDVLDTFHVIAELPPDNFGAYIISMATAPSDVLAVELLQRECHIKHPLRVVPLFEKLADLEAAPAALARLFSIDWYRNRINGKQEVMIGYSDSGKDAGRFSAAWQLYKAQEELINVAKKFGVKLTMFHGRGGTVGRGGGPTHLAILSQPPDTIHGSLRVTVQGEVIEQSFGEQHLCFRTLQRFTAATLEHGMHPPISPKPEWRALMDQMAVIATEEYRSIVFKEPRFVEYFRLATPELEYGRMNIGSRPAKRRPSGGIETLRAIPWIFAWTQTRFHLPVWLGFGAAFKKVIEENVKNLNMLQEMYNQWPFFRVTLDLVEMVFAKGDPKIAALNDRLLVSKDLWPFGDQLRNKYEETRKLLLQVAGHKEILEGDPYLKQRLRLRHAPITTLNIVQAYTLKRIRDPNYNVKVRPRISKESAEASKSADELVKLNPTSEYAPGLEDTLILTMKGIAAGMQNTG</sequence>
<evidence type="ECO:0000250" key="1"/>
<evidence type="ECO:0000305" key="2"/>
<proteinExistence type="evidence at transcript level"/>
<dbReference type="EC" id="4.1.1.31"/>
<dbReference type="EMBL" id="D13998">
    <property type="protein sequence ID" value="BAA03100.1"/>
    <property type="molecule type" value="mRNA"/>
</dbReference>
<dbReference type="RefSeq" id="NP_001241357.1">
    <property type="nucleotide sequence ID" value="NM_001254428.2"/>
</dbReference>
<dbReference type="RefSeq" id="XP_006591889.1">
    <property type="nucleotide sequence ID" value="XM_006591826.3"/>
</dbReference>
<dbReference type="RefSeq" id="XP_006591890.1">
    <property type="nucleotide sequence ID" value="XM_006591827.4"/>
</dbReference>
<dbReference type="SMR" id="P51061"/>
<dbReference type="FunCoup" id="P51061">
    <property type="interactions" value="447"/>
</dbReference>
<dbReference type="STRING" id="3847.P51061"/>
<dbReference type="PaxDb" id="3847-GLYMA12G35840.1"/>
<dbReference type="ProMEX" id="P51061"/>
<dbReference type="EnsemblPlants" id="KRH27344">
    <property type="protein sequence ID" value="KRH27344"/>
    <property type="gene ID" value="GLYMA_12G229400"/>
</dbReference>
<dbReference type="EnsemblPlants" id="KRH27345">
    <property type="protein sequence ID" value="KRH27345"/>
    <property type="gene ID" value="GLYMA_12G229400"/>
</dbReference>
<dbReference type="EnsemblPlants" id="KRH27346">
    <property type="protein sequence ID" value="KRH27346"/>
    <property type="gene ID" value="GLYMA_12G229400"/>
</dbReference>
<dbReference type="GeneID" id="100805069"/>
<dbReference type="Gramene" id="KRH27344">
    <property type="protein sequence ID" value="KRH27344"/>
    <property type="gene ID" value="GLYMA_12G229400"/>
</dbReference>
<dbReference type="Gramene" id="KRH27345">
    <property type="protein sequence ID" value="KRH27345"/>
    <property type="gene ID" value="GLYMA_12G229400"/>
</dbReference>
<dbReference type="Gramene" id="KRH27346">
    <property type="protein sequence ID" value="KRH27346"/>
    <property type="gene ID" value="GLYMA_12G229400"/>
</dbReference>
<dbReference type="KEGG" id="gmx:100805069"/>
<dbReference type="eggNOG" id="ENOG502QPVS">
    <property type="taxonomic scope" value="Eukaryota"/>
</dbReference>
<dbReference type="HOGENOM" id="CLU_006557_2_0_1"/>
<dbReference type="InParanoid" id="P51061"/>
<dbReference type="OMA" id="KDLWPFG"/>
<dbReference type="OrthoDB" id="1365747at2759"/>
<dbReference type="Proteomes" id="UP000008827">
    <property type="component" value="Chromosome 12"/>
</dbReference>
<dbReference type="GO" id="GO:0005829">
    <property type="term" value="C:cytosol"/>
    <property type="evidence" value="ECO:0000318"/>
    <property type="project" value="GO_Central"/>
</dbReference>
<dbReference type="GO" id="GO:0008964">
    <property type="term" value="F:phosphoenolpyruvate carboxylase activity"/>
    <property type="evidence" value="ECO:0000318"/>
    <property type="project" value="GO_Central"/>
</dbReference>
<dbReference type="GO" id="GO:0015977">
    <property type="term" value="P:carbon fixation"/>
    <property type="evidence" value="ECO:0007669"/>
    <property type="project" value="UniProtKB-KW"/>
</dbReference>
<dbReference type="GO" id="GO:0048366">
    <property type="term" value="P:leaf development"/>
    <property type="evidence" value="ECO:0000318"/>
    <property type="project" value="GO_Central"/>
</dbReference>
<dbReference type="GO" id="GO:0015979">
    <property type="term" value="P:photosynthesis"/>
    <property type="evidence" value="ECO:0007669"/>
    <property type="project" value="UniProtKB-KW"/>
</dbReference>
<dbReference type="GO" id="GO:0006099">
    <property type="term" value="P:tricarboxylic acid cycle"/>
    <property type="evidence" value="ECO:0007669"/>
    <property type="project" value="InterPro"/>
</dbReference>
<dbReference type="FunFam" id="1.20.1440.90:FF:000001">
    <property type="entry name" value="Phosphoenolpyruvate carboxylase 1"/>
    <property type="match status" value="1"/>
</dbReference>
<dbReference type="Gene3D" id="1.20.1440.90">
    <property type="entry name" value="Phosphoenolpyruvate/pyruvate domain"/>
    <property type="match status" value="1"/>
</dbReference>
<dbReference type="HAMAP" id="MF_00595">
    <property type="entry name" value="PEPcase_type1"/>
    <property type="match status" value="1"/>
</dbReference>
<dbReference type="InterPro" id="IPR021135">
    <property type="entry name" value="PEP_COase"/>
</dbReference>
<dbReference type="InterPro" id="IPR022805">
    <property type="entry name" value="PEP_COase_bac/pln-type"/>
</dbReference>
<dbReference type="InterPro" id="IPR018129">
    <property type="entry name" value="PEP_COase_Lys_AS"/>
</dbReference>
<dbReference type="InterPro" id="IPR033129">
    <property type="entry name" value="PEPCASE_His_AS"/>
</dbReference>
<dbReference type="InterPro" id="IPR015813">
    <property type="entry name" value="Pyrv/PenolPyrv_kinase-like_dom"/>
</dbReference>
<dbReference type="NCBIfam" id="NF000584">
    <property type="entry name" value="PRK00009.1"/>
    <property type="match status" value="1"/>
</dbReference>
<dbReference type="PANTHER" id="PTHR30523">
    <property type="entry name" value="PHOSPHOENOLPYRUVATE CARBOXYLASE"/>
    <property type="match status" value="1"/>
</dbReference>
<dbReference type="PANTHER" id="PTHR30523:SF37">
    <property type="entry name" value="PHOSPHOENOLPYRUVATE CARBOXYLASE"/>
    <property type="match status" value="1"/>
</dbReference>
<dbReference type="Pfam" id="PF00311">
    <property type="entry name" value="PEPcase"/>
    <property type="match status" value="1"/>
</dbReference>
<dbReference type="PRINTS" id="PR00150">
    <property type="entry name" value="PEPCARBXLASE"/>
</dbReference>
<dbReference type="SUPFAM" id="SSF51621">
    <property type="entry name" value="Phosphoenolpyruvate/pyruvate domain"/>
    <property type="match status" value="1"/>
</dbReference>
<dbReference type="PROSITE" id="PS00781">
    <property type="entry name" value="PEPCASE_1"/>
    <property type="match status" value="1"/>
</dbReference>
<dbReference type="PROSITE" id="PS00393">
    <property type="entry name" value="PEPCASE_2"/>
    <property type="match status" value="1"/>
</dbReference>